<name>HFQ_ALKEH</name>
<evidence type="ECO:0000255" key="1">
    <source>
        <dbReference type="HAMAP-Rule" id="MF_00436"/>
    </source>
</evidence>
<evidence type="ECO:0000255" key="2">
    <source>
        <dbReference type="PROSITE-ProRule" id="PRU01346"/>
    </source>
</evidence>
<evidence type="ECO:0000256" key="3">
    <source>
        <dbReference type="SAM" id="MobiDB-lite"/>
    </source>
</evidence>
<keyword id="KW-1185">Reference proteome</keyword>
<keyword id="KW-0694">RNA-binding</keyword>
<keyword id="KW-0346">Stress response</keyword>
<dbReference type="EMBL" id="CP000453">
    <property type="protein sequence ID" value="ABI55927.1"/>
    <property type="molecule type" value="Genomic_DNA"/>
</dbReference>
<dbReference type="RefSeq" id="WP_011628322.1">
    <property type="nucleotide sequence ID" value="NC_008340.1"/>
</dbReference>
<dbReference type="SMR" id="Q0AB60"/>
<dbReference type="KEGG" id="aeh:Mlg_0573"/>
<dbReference type="eggNOG" id="COG1923">
    <property type="taxonomic scope" value="Bacteria"/>
</dbReference>
<dbReference type="HOGENOM" id="CLU_113688_2_2_6"/>
<dbReference type="OrthoDB" id="9799751at2"/>
<dbReference type="Proteomes" id="UP000001962">
    <property type="component" value="Chromosome"/>
</dbReference>
<dbReference type="GO" id="GO:0005829">
    <property type="term" value="C:cytosol"/>
    <property type="evidence" value="ECO:0007669"/>
    <property type="project" value="TreeGrafter"/>
</dbReference>
<dbReference type="GO" id="GO:0003723">
    <property type="term" value="F:RNA binding"/>
    <property type="evidence" value="ECO:0007669"/>
    <property type="project" value="UniProtKB-UniRule"/>
</dbReference>
<dbReference type="GO" id="GO:0006355">
    <property type="term" value="P:regulation of DNA-templated transcription"/>
    <property type="evidence" value="ECO:0007669"/>
    <property type="project" value="InterPro"/>
</dbReference>
<dbReference type="GO" id="GO:0043487">
    <property type="term" value="P:regulation of RNA stability"/>
    <property type="evidence" value="ECO:0007669"/>
    <property type="project" value="TreeGrafter"/>
</dbReference>
<dbReference type="GO" id="GO:0045974">
    <property type="term" value="P:regulation of translation, ncRNA-mediated"/>
    <property type="evidence" value="ECO:0007669"/>
    <property type="project" value="TreeGrafter"/>
</dbReference>
<dbReference type="CDD" id="cd01716">
    <property type="entry name" value="Hfq"/>
    <property type="match status" value="1"/>
</dbReference>
<dbReference type="FunFam" id="2.30.30.100:FF:000001">
    <property type="entry name" value="RNA-binding protein Hfq"/>
    <property type="match status" value="1"/>
</dbReference>
<dbReference type="Gene3D" id="2.30.30.100">
    <property type="match status" value="1"/>
</dbReference>
<dbReference type="HAMAP" id="MF_00436">
    <property type="entry name" value="Hfq"/>
    <property type="match status" value="1"/>
</dbReference>
<dbReference type="InterPro" id="IPR005001">
    <property type="entry name" value="Hfq"/>
</dbReference>
<dbReference type="InterPro" id="IPR010920">
    <property type="entry name" value="LSM_dom_sf"/>
</dbReference>
<dbReference type="InterPro" id="IPR047575">
    <property type="entry name" value="Sm"/>
</dbReference>
<dbReference type="NCBIfam" id="TIGR02383">
    <property type="entry name" value="Hfq"/>
    <property type="match status" value="1"/>
</dbReference>
<dbReference type="NCBIfam" id="NF001602">
    <property type="entry name" value="PRK00395.1"/>
    <property type="match status" value="1"/>
</dbReference>
<dbReference type="PANTHER" id="PTHR34772">
    <property type="entry name" value="RNA-BINDING PROTEIN HFQ"/>
    <property type="match status" value="1"/>
</dbReference>
<dbReference type="PANTHER" id="PTHR34772:SF1">
    <property type="entry name" value="RNA-BINDING PROTEIN HFQ"/>
    <property type="match status" value="1"/>
</dbReference>
<dbReference type="Pfam" id="PF17209">
    <property type="entry name" value="Hfq"/>
    <property type="match status" value="1"/>
</dbReference>
<dbReference type="SUPFAM" id="SSF50182">
    <property type="entry name" value="Sm-like ribonucleoproteins"/>
    <property type="match status" value="1"/>
</dbReference>
<dbReference type="PROSITE" id="PS52002">
    <property type="entry name" value="SM"/>
    <property type="match status" value="1"/>
</dbReference>
<sequence length="89" mass="9947">MAKGQSLQEPFLNALRKEKVPVSIYLVNGIKLQGQIESFDQFVILLRNNVNQMVYKHAISTVVPARNVRTAPPVPTETHAQSSEEFGNI</sequence>
<feature type="chain" id="PRO_0000265136" description="RNA-binding protein Hfq">
    <location>
        <begin position="1"/>
        <end position="89"/>
    </location>
</feature>
<feature type="domain" description="Sm" evidence="2">
    <location>
        <begin position="9"/>
        <end position="68"/>
    </location>
</feature>
<feature type="region of interest" description="Disordered" evidence="3">
    <location>
        <begin position="70"/>
        <end position="89"/>
    </location>
</feature>
<feature type="compositionally biased region" description="Polar residues" evidence="3">
    <location>
        <begin position="78"/>
        <end position="89"/>
    </location>
</feature>
<protein>
    <recommendedName>
        <fullName evidence="1">RNA-binding protein Hfq</fullName>
    </recommendedName>
</protein>
<accession>Q0AB60</accession>
<comment type="function">
    <text evidence="1">RNA chaperone that binds small regulatory RNA (sRNAs) and mRNAs to facilitate mRNA translational regulation in response to envelope stress, environmental stress and changes in metabolite concentrations. Also binds with high specificity to tRNAs.</text>
</comment>
<comment type="subunit">
    <text evidence="1">Homohexamer.</text>
</comment>
<comment type="similarity">
    <text evidence="1">Belongs to the Hfq family.</text>
</comment>
<gene>
    <name evidence="1" type="primary">hfq</name>
    <name type="ordered locus">Mlg_0573</name>
</gene>
<reference key="1">
    <citation type="submission" date="2006-08" db="EMBL/GenBank/DDBJ databases">
        <title>Complete sequence of Alkalilimnicola ehrilichei MLHE-1.</title>
        <authorList>
            <person name="Copeland A."/>
            <person name="Lucas S."/>
            <person name="Lapidus A."/>
            <person name="Barry K."/>
            <person name="Detter J.C."/>
            <person name="Glavina del Rio T."/>
            <person name="Hammon N."/>
            <person name="Israni S."/>
            <person name="Dalin E."/>
            <person name="Tice H."/>
            <person name="Pitluck S."/>
            <person name="Sims D."/>
            <person name="Brettin T."/>
            <person name="Bruce D."/>
            <person name="Han C."/>
            <person name="Tapia R."/>
            <person name="Gilna P."/>
            <person name="Schmutz J."/>
            <person name="Larimer F."/>
            <person name="Land M."/>
            <person name="Hauser L."/>
            <person name="Kyrpides N."/>
            <person name="Mikhailova N."/>
            <person name="Oremland R.S."/>
            <person name="Hoeft S.E."/>
            <person name="Switzer-Blum J."/>
            <person name="Kulp T."/>
            <person name="King G."/>
            <person name="Tabita R."/>
            <person name="Witte B."/>
            <person name="Santini J.M."/>
            <person name="Basu P."/>
            <person name="Hollibaugh J.T."/>
            <person name="Xie G."/>
            <person name="Stolz J.F."/>
            <person name="Richardson P."/>
        </authorList>
    </citation>
    <scope>NUCLEOTIDE SEQUENCE [LARGE SCALE GENOMIC DNA]</scope>
    <source>
        <strain>ATCC BAA-1101 / DSM 17681 / MLHE-1</strain>
    </source>
</reference>
<organism>
    <name type="scientific">Alkalilimnicola ehrlichii (strain ATCC BAA-1101 / DSM 17681 / MLHE-1)</name>
    <dbReference type="NCBI Taxonomy" id="187272"/>
    <lineage>
        <taxon>Bacteria</taxon>
        <taxon>Pseudomonadati</taxon>
        <taxon>Pseudomonadota</taxon>
        <taxon>Gammaproteobacteria</taxon>
        <taxon>Chromatiales</taxon>
        <taxon>Ectothiorhodospiraceae</taxon>
        <taxon>Alkalilimnicola</taxon>
    </lineage>
</organism>
<proteinExistence type="inferred from homology"/>